<proteinExistence type="evidence at protein level"/>
<name>ACP1_SPIOL</name>
<evidence type="ECO:0000250" key="1"/>
<evidence type="ECO:0000255" key="2">
    <source>
        <dbReference type="PROSITE-ProRule" id="PRU00258"/>
    </source>
</evidence>
<evidence type="ECO:0000269" key="3">
    <source>
    </source>
</evidence>
<evidence type="ECO:0000269" key="4">
    <source>
    </source>
</evidence>
<evidence type="ECO:0000305" key="5"/>
<evidence type="ECO:0007829" key="6">
    <source>
        <dbReference type="PDB" id="2FVA"/>
    </source>
</evidence>
<evidence type="ECO:0007829" key="7">
    <source>
        <dbReference type="PDB" id="2XZ0"/>
    </source>
</evidence>
<feature type="transit peptide" description="Chloroplast" evidence="4">
    <location>
        <begin position="1"/>
        <end position="56"/>
    </location>
</feature>
<feature type="chain" id="PRO_0000000584" description="Acyl carrier protein 1, chloroplastic">
    <location>
        <begin position="57"/>
        <end position="138"/>
    </location>
</feature>
<feature type="domain" description="Carrier" evidence="2">
    <location>
        <begin position="59"/>
        <end position="134"/>
    </location>
</feature>
<feature type="modified residue" description="O-(pantetheine 4'-phosphoryl)serine" evidence="2 3">
    <location>
        <position position="94"/>
    </location>
</feature>
<feature type="sequence conflict" description="In Ref. 2; AA sequence." evidence="5" ref="2">
    <original>C</original>
    <variation>S</variation>
    <location>
        <position position="66"/>
    </location>
</feature>
<feature type="helix" evidence="7">
    <location>
        <begin position="59"/>
        <end position="63"/>
    </location>
</feature>
<feature type="helix" evidence="7">
    <location>
        <begin position="66"/>
        <end position="71"/>
    </location>
</feature>
<feature type="turn" evidence="7">
    <location>
        <begin position="72"/>
        <end position="74"/>
    </location>
</feature>
<feature type="strand" evidence="7">
    <location>
        <begin position="77"/>
        <end position="79"/>
    </location>
</feature>
<feature type="strand" evidence="6">
    <location>
        <begin position="83"/>
        <end position="85"/>
    </location>
</feature>
<feature type="helix" evidence="7">
    <location>
        <begin position="87"/>
        <end position="90"/>
    </location>
</feature>
<feature type="helix" evidence="7">
    <location>
        <begin position="95"/>
        <end position="103"/>
    </location>
</feature>
<feature type="turn" evidence="7">
    <location>
        <begin position="104"/>
        <end position="107"/>
    </location>
</feature>
<feature type="turn" evidence="7">
    <location>
        <begin position="114"/>
        <end position="118"/>
    </location>
</feature>
<feature type="strand" evidence="7">
    <location>
        <begin position="121"/>
        <end position="123"/>
    </location>
</feature>
<feature type="helix" evidence="7">
    <location>
        <begin position="124"/>
        <end position="133"/>
    </location>
</feature>
<feature type="turn" evidence="7">
    <location>
        <begin position="135"/>
        <end position="137"/>
    </location>
</feature>
<keyword id="KW-0002">3D-structure</keyword>
<keyword id="KW-0150">Chloroplast</keyword>
<keyword id="KW-0903">Direct protein sequencing</keyword>
<keyword id="KW-0275">Fatty acid biosynthesis</keyword>
<keyword id="KW-0276">Fatty acid metabolism</keyword>
<keyword id="KW-0444">Lipid biosynthesis</keyword>
<keyword id="KW-0443">Lipid metabolism</keyword>
<keyword id="KW-0596">Phosphopantetheine</keyword>
<keyword id="KW-0597">Phosphoprotein</keyword>
<keyword id="KW-0934">Plastid</keyword>
<keyword id="KW-1185">Reference proteome</keyword>
<keyword id="KW-0809">Transit peptide</keyword>
<sequence length="138" mass="14909">MASLSATTTVRVQPSSSSLHKLSQGNGRCSSIVCLDWGKSSFPTLRTSRRRSFISAAKKETIDKVCDIVKEKLALGADVVVTADSEFSKLGADSLDTVEIVMNLEEEFGINVDEDKAQDISTIQQAADVIESLLEKKA</sequence>
<accession>P07854</accession>
<comment type="function">
    <text>Carrier of the growing fatty acid chain in fatty acid biosynthesis.</text>
</comment>
<comment type="pathway">
    <text>Lipid metabolism; fatty acid biosynthesis.</text>
</comment>
<comment type="interaction">
    <interactant intactId="EBI-15944962">
        <id>P07854</id>
    </interactant>
    <interactant intactId="EBI-15944981">
        <id>P22337</id>
    </interactant>
    <organismsDiffer>true</organismsDiffer>
    <experiments>2</experiments>
</comment>
<comment type="subcellular location">
    <subcellularLocation>
        <location>Plastid</location>
        <location>Chloroplast</location>
    </subcellularLocation>
</comment>
<comment type="PTM">
    <text evidence="1">4'-phosphopantetheine is transferred from CoA to a specific serine of apo-ACP by acpS. This modification is essential for activity because fatty acids are bound in thioester linkage to the sulfhydryl of the prosthetic group (By similarity).</text>
</comment>
<comment type="similarity">
    <text evidence="5">Belongs to the acyl carrier protein (ACP) family.</text>
</comment>
<dbReference type="EMBL" id="M17636">
    <property type="protein sequence ID" value="AAA34023.1"/>
    <property type="molecule type" value="mRNA"/>
</dbReference>
<dbReference type="PIR" id="A28052">
    <property type="entry name" value="AYSP"/>
</dbReference>
<dbReference type="PDB" id="2AVA">
    <property type="method" value="NMR"/>
    <property type="chains" value="A=57-138"/>
</dbReference>
<dbReference type="PDB" id="2FVA">
    <property type="method" value="NMR"/>
    <property type="chains" value="A=57-138"/>
</dbReference>
<dbReference type="PDB" id="2FVE">
    <property type="method" value="NMR"/>
    <property type="chains" value="A=57-138"/>
</dbReference>
<dbReference type="PDB" id="2FVF">
    <property type="method" value="NMR"/>
    <property type="chains" value="A=57-138"/>
</dbReference>
<dbReference type="PDB" id="2XZ0">
    <property type="method" value="X-ray"/>
    <property type="resolution" value="3.00 A"/>
    <property type="chains" value="D=57-138"/>
</dbReference>
<dbReference type="PDB" id="2XZ1">
    <property type="method" value="X-ray"/>
    <property type="resolution" value="3.35 A"/>
    <property type="chains" value="C/D=57-138"/>
</dbReference>
<dbReference type="PDBsum" id="2AVA"/>
<dbReference type="PDBsum" id="2FVA"/>
<dbReference type="PDBsum" id="2FVE"/>
<dbReference type="PDBsum" id="2FVF"/>
<dbReference type="PDBsum" id="2XZ0"/>
<dbReference type="PDBsum" id="2XZ1"/>
<dbReference type="BMRB" id="P07854"/>
<dbReference type="SMR" id="P07854"/>
<dbReference type="DIP" id="DIP-60378N"/>
<dbReference type="IntAct" id="P07854">
    <property type="interactions" value="1"/>
</dbReference>
<dbReference type="UniPathway" id="UPA00094"/>
<dbReference type="EvolutionaryTrace" id="P07854"/>
<dbReference type="Proteomes" id="UP001155700">
    <property type="component" value="Unplaced"/>
</dbReference>
<dbReference type="GO" id="GO:0009507">
    <property type="term" value="C:chloroplast"/>
    <property type="evidence" value="ECO:0007669"/>
    <property type="project" value="UniProtKB-SubCell"/>
</dbReference>
<dbReference type="GO" id="GO:0000036">
    <property type="term" value="F:acyl carrier activity"/>
    <property type="evidence" value="ECO:0007669"/>
    <property type="project" value="InterPro"/>
</dbReference>
<dbReference type="GO" id="GO:0031177">
    <property type="term" value="F:phosphopantetheine binding"/>
    <property type="evidence" value="ECO:0007669"/>
    <property type="project" value="InterPro"/>
</dbReference>
<dbReference type="Gene3D" id="1.10.1200.10">
    <property type="entry name" value="ACP-like"/>
    <property type="match status" value="1"/>
</dbReference>
<dbReference type="HAMAP" id="MF_01217">
    <property type="entry name" value="Acyl_carrier"/>
    <property type="match status" value="1"/>
</dbReference>
<dbReference type="InterPro" id="IPR003231">
    <property type="entry name" value="ACP"/>
</dbReference>
<dbReference type="InterPro" id="IPR036736">
    <property type="entry name" value="ACP-like_sf"/>
</dbReference>
<dbReference type="InterPro" id="IPR044813">
    <property type="entry name" value="ACP_chloroplastic"/>
</dbReference>
<dbReference type="InterPro" id="IPR020806">
    <property type="entry name" value="PKS_PP-bd"/>
</dbReference>
<dbReference type="InterPro" id="IPR009081">
    <property type="entry name" value="PP-bd_ACP"/>
</dbReference>
<dbReference type="InterPro" id="IPR006162">
    <property type="entry name" value="Ppantetheine_attach_site"/>
</dbReference>
<dbReference type="NCBIfam" id="TIGR00517">
    <property type="entry name" value="acyl_carrier"/>
    <property type="match status" value="1"/>
</dbReference>
<dbReference type="PANTHER" id="PTHR46153">
    <property type="entry name" value="ACYL CARRIER PROTEIN"/>
    <property type="match status" value="1"/>
</dbReference>
<dbReference type="PANTHER" id="PTHR46153:SF11">
    <property type="entry name" value="ACYL CARRIER PROTEIN 4, CHLOROPLASTIC"/>
    <property type="match status" value="1"/>
</dbReference>
<dbReference type="Pfam" id="PF00550">
    <property type="entry name" value="PP-binding"/>
    <property type="match status" value="1"/>
</dbReference>
<dbReference type="SMART" id="SM00823">
    <property type="entry name" value="PKS_PP"/>
    <property type="match status" value="1"/>
</dbReference>
<dbReference type="SUPFAM" id="SSF47336">
    <property type="entry name" value="ACP-like"/>
    <property type="match status" value="1"/>
</dbReference>
<dbReference type="PROSITE" id="PS50075">
    <property type="entry name" value="CARRIER"/>
    <property type="match status" value="1"/>
</dbReference>
<dbReference type="PROSITE" id="PS00012">
    <property type="entry name" value="PHOSPHOPANTETHEINE"/>
    <property type="match status" value="1"/>
</dbReference>
<organism>
    <name type="scientific">Spinacia oleracea</name>
    <name type="common">Spinach</name>
    <dbReference type="NCBI Taxonomy" id="3562"/>
    <lineage>
        <taxon>Eukaryota</taxon>
        <taxon>Viridiplantae</taxon>
        <taxon>Streptophyta</taxon>
        <taxon>Embryophyta</taxon>
        <taxon>Tracheophyta</taxon>
        <taxon>Spermatophyta</taxon>
        <taxon>Magnoliopsida</taxon>
        <taxon>eudicotyledons</taxon>
        <taxon>Gunneridae</taxon>
        <taxon>Pentapetalae</taxon>
        <taxon>Caryophyllales</taxon>
        <taxon>Chenopodiaceae</taxon>
        <taxon>Chenopodioideae</taxon>
        <taxon>Anserineae</taxon>
        <taxon>Spinacia</taxon>
    </lineage>
</organism>
<gene>
    <name type="primary">ACL1.1</name>
</gene>
<reference key="1">
    <citation type="journal article" date="1987" name="Plant Mol. Biol.">
        <title>Isolation of a cDNA clone for the acyl carrier protein-I of spinach.</title>
        <authorList>
            <person name="Scherer D.E."/>
            <person name="Knauf V.C."/>
        </authorList>
        <dbReference type="AGRICOLA" id="IND92000043"/>
    </citation>
    <scope>NUCLEOTIDE SEQUENCE [MRNA]</scope>
</reference>
<reference key="2">
    <citation type="journal article" date="1984" name="Arch. Biochem. Biophys.">
        <title>The primary structure of spinach acyl carrier protein.</title>
        <authorList>
            <person name="Kuo T.M."/>
            <person name="Ohlrogge J.B."/>
        </authorList>
    </citation>
    <scope>PROTEIN SEQUENCE OF 57-138</scope>
    <source>
        <tissue>Leaf</tissue>
    </source>
</reference>
<reference key="3">
    <citation type="journal article" date="2006" name="Biochemistry">
        <title>Solution structures of spinach acyl carrier protein with decanoate and stearate.</title>
        <authorList>
            <person name="Zornetzer G.A."/>
            <person name="Fox B.G."/>
            <person name="Markley J.L."/>
        </authorList>
    </citation>
    <scope>STRUCTURE BY NMR OF 57-138 IN COMPLEX WITH PHOSPHOPANTETHEINE</scope>
    <scope>PHOSPHOPANTETHEINYLATION AT SER-94</scope>
</reference>
<protein>
    <recommendedName>
        <fullName>Acyl carrier protein 1, chloroplastic</fullName>
        <shortName>ACP I</shortName>
        <shortName>Acyl carrier protein I</shortName>
    </recommendedName>
</protein>